<dbReference type="EC" id="6.1.1.5" evidence="1"/>
<dbReference type="EMBL" id="CP000094">
    <property type="protein sequence ID" value="ABA76589.1"/>
    <property type="molecule type" value="Genomic_DNA"/>
</dbReference>
<dbReference type="RefSeq" id="WP_011336005.1">
    <property type="nucleotide sequence ID" value="NC_007492.2"/>
</dbReference>
<dbReference type="SMR" id="Q3K6L5"/>
<dbReference type="KEGG" id="pfo:Pfl01_4852"/>
<dbReference type="eggNOG" id="COG0060">
    <property type="taxonomic scope" value="Bacteria"/>
</dbReference>
<dbReference type="HOGENOM" id="CLU_001493_7_1_6"/>
<dbReference type="Proteomes" id="UP000002704">
    <property type="component" value="Chromosome"/>
</dbReference>
<dbReference type="GO" id="GO:0005829">
    <property type="term" value="C:cytosol"/>
    <property type="evidence" value="ECO:0007669"/>
    <property type="project" value="TreeGrafter"/>
</dbReference>
<dbReference type="GO" id="GO:0002161">
    <property type="term" value="F:aminoacyl-tRNA deacylase activity"/>
    <property type="evidence" value="ECO:0007669"/>
    <property type="project" value="InterPro"/>
</dbReference>
<dbReference type="GO" id="GO:0005524">
    <property type="term" value="F:ATP binding"/>
    <property type="evidence" value="ECO:0007669"/>
    <property type="project" value="UniProtKB-UniRule"/>
</dbReference>
<dbReference type="GO" id="GO:0004822">
    <property type="term" value="F:isoleucine-tRNA ligase activity"/>
    <property type="evidence" value="ECO:0007669"/>
    <property type="project" value="UniProtKB-UniRule"/>
</dbReference>
<dbReference type="GO" id="GO:0000049">
    <property type="term" value="F:tRNA binding"/>
    <property type="evidence" value="ECO:0007669"/>
    <property type="project" value="InterPro"/>
</dbReference>
<dbReference type="GO" id="GO:0008270">
    <property type="term" value="F:zinc ion binding"/>
    <property type="evidence" value="ECO:0007669"/>
    <property type="project" value="UniProtKB-UniRule"/>
</dbReference>
<dbReference type="GO" id="GO:0006428">
    <property type="term" value="P:isoleucyl-tRNA aminoacylation"/>
    <property type="evidence" value="ECO:0007669"/>
    <property type="project" value="UniProtKB-UniRule"/>
</dbReference>
<dbReference type="CDD" id="cd07960">
    <property type="entry name" value="Anticodon_Ia_Ile_BEm"/>
    <property type="match status" value="1"/>
</dbReference>
<dbReference type="CDD" id="cd00818">
    <property type="entry name" value="IleRS_core"/>
    <property type="match status" value="1"/>
</dbReference>
<dbReference type="FunFam" id="1.10.730.20:FF:000001">
    <property type="entry name" value="Isoleucine--tRNA ligase"/>
    <property type="match status" value="1"/>
</dbReference>
<dbReference type="FunFam" id="3.40.50.620:FF:000042">
    <property type="entry name" value="Isoleucine--tRNA ligase"/>
    <property type="match status" value="1"/>
</dbReference>
<dbReference type="FunFam" id="3.40.50.620:FF:000048">
    <property type="entry name" value="Isoleucine--tRNA ligase"/>
    <property type="match status" value="1"/>
</dbReference>
<dbReference type="Gene3D" id="1.10.730.20">
    <property type="match status" value="1"/>
</dbReference>
<dbReference type="Gene3D" id="3.40.50.620">
    <property type="entry name" value="HUPs"/>
    <property type="match status" value="2"/>
</dbReference>
<dbReference type="Gene3D" id="3.90.740.10">
    <property type="entry name" value="Valyl/Leucyl/Isoleucyl-tRNA synthetase, editing domain"/>
    <property type="match status" value="1"/>
</dbReference>
<dbReference type="HAMAP" id="MF_02002">
    <property type="entry name" value="Ile_tRNA_synth_type1"/>
    <property type="match status" value="1"/>
</dbReference>
<dbReference type="InterPro" id="IPR001412">
    <property type="entry name" value="aa-tRNA-synth_I_CS"/>
</dbReference>
<dbReference type="InterPro" id="IPR002300">
    <property type="entry name" value="aa-tRNA-synth_Ia"/>
</dbReference>
<dbReference type="InterPro" id="IPR033708">
    <property type="entry name" value="Anticodon_Ile_BEm"/>
</dbReference>
<dbReference type="InterPro" id="IPR002301">
    <property type="entry name" value="Ile-tRNA-ligase"/>
</dbReference>
<dbReference type="InterPro" id="IPR023585">
    <property type="entry name" value="Ile-tRNA-ligase_type1"/>
</dbReference>
<dbReference type="InterPro" id="IPR050081">
    <property type="entry name" value="Ile-tRNA_ligase"/>
</dbReference>
<dbReference type="InterPro" id="IPR013155">
    <property type="entry name" value="M/V/L/I-tRNA-synth_anticd-bd"/>
</dbReference>
<dbReference type="InterPro" id="IPR014729">
    <property type="entry name" value="Rossmann-like_a/b/a_fold"/>
</dbReference>
<dbReference type="InterPro" id="IPR009080">
    <property type="entry name" value="tRNAsynth_Ia_anticodon-bd"/>
</dbReference>
<dbReference type="InterPro" id="IPR009008">
    <property type="entry name" value="Val/Leu/Ile-tRNA-synth_edit"/>
</dbReference>
<dbReference type="InterPro" id="IPR010663">
    <property type="entry name" value="Znf_FPG/IleRS"/>
</dbReference>
<dbReference type="NCBIfam" id="TIGR00392">
    <property type="entry name" value="ileS"/>
    <property type="match status" value="1"/>
</dbReference>
<dbReference type="PANTHER" id="PTHR42765:SF1">
    <property type="entry name" value="ISOLEUCINE--TRNA LIGASE, MITOCHONDRIAL"/>
    <property type="match status" value="1"/>
</dbReference>
<dbReference type="PANTHER" id="PTHR42765">
    <property type="entry name" value="SOLEUCYL-TRNA SYNTHETASE"/>
    <property type="match status" value="1"/>
</dbReference>
<dbReference type="Pfam" id="PF08264">
    <property type="entry name" value="Anticodon_1"/>
    <property type="match status" value="1"/>
</dbReference>
<dbReference type="Pfam" id="PF00133">
    <property type="entry name" value="tRNA-synt_1"/>
    <property type="match status" value="1"/>
</dbReference>
<dbReference type="Pfam" id="PF06827">
    <property type="entry name" value="zf-FPG_IleRS"/>
    <property type="match status" value="1"/>
</dbReference>
<dbReference type="PRINTS" id="PR00984">
    <property type="entry name" value="TRNASYNTHILE"/>
</dbReference>
<dbReference type="SUPFAM" id="SSF47323">
    <property type="entry name" value="Anticodon-binding domain of a subclass of class I aminoacyl-tRNA synthetases"/>
    <property type="match status" value="1"/>
</dbReference>
<dbReference type="SUPFAM" id="SSF52374">
    <property type="entry name" value="Nucleotidylyl transferase"/>
    <property type="match status" value="1"/>
</dbReference>
<dbReference type="SUPFAM" id="SSF50677">
    <property type="entry name" value="ValRS/IleRS/LeuRS editing domain"/>
    <property type="match status" value="1"/>
</dbReference>
<dbReference type="PROSITE" id="PS00178">
    <property type="entry name" value="AA_TRNA_LIGASE_I"/>
    <property type="match status" value="1"/>
</dbReference>
<feature type="chain" id="PRO_1000022108" description="Isoleucine--tRNA ligase">
    <location>
        <begin position="1"/>
        <end position="943"/>
    </location>
</feature>
<feature type="short sequence motif" description="'HIGH' region">
    <location>
        <begin position="58"/>
        <end position="68"/>
    </location>
</feature>
<feature type="short sequence motif" description="'KMSKS' region">
    <location>
        <begin position="608"/>
        <end position="612"/>
    </location>
</feature>
<feature type="binding site" evidence="1">
    <location>
        <position position="567"/>
    </location>
    <ligand>
        <name>L-isoleucyl-5'-AMP</name>
        <dbReference type="ChEBI" id="CHEBI:178002"/>
    </ligand>
</feature>
<feature type="binding site" evidence="1">
    <location>
        <position position="611"/>
    </location>
    <ligand>
        <name>ATP</name>
        <dbReference type="ChEBI" id="CHEBI:30616"/>
    </ligand>
</feature>
<feature type="binding site" evidence="1">
    <location>
        <position position="906"/>
    </location>
    <ligand>
        <name>Zn(2+)</name>
        <dbReference type="ChEBI" id="CHEBI:29105"/>
    </ligand>
</feature>
<feature type="binding site" evidence="1">
    <location>
        <position position="909"/>
    </location>
    <ligand>
        <name>Zn(2+)</name>
        <dbReference type="ChEBI" id="CHEBI:29105"/>
    </ligand>
</feature>
<feature type="binding site" evidence="1">
    <location>
        <position position="926"/>
    </location>
    <ligand>
        <name>Zn(2+)</name>
        <dbReference type="ChEBI" id="CHEBI:29105"/>
    </ligand>
</feature>
<feature type="binding site" evidence="1">
    <location>
        <position position="929"/>
    </location>
    <ligand>
        <name>Zn(2+)</name>
        <dbReference type="ChEBI" id="CHEBI:29105"/>
    </ligand>
</feature>
<keyword id="KW-0030">Aminoacyl-tRNA synthetase</keyword>
<keyword id="KW-0067">ATP-binding</keyword>
<keyword id="KW-0963">Cytoplasm</keyword>
<keyword id="KW-0436">Ligase</keyword>
<keyword id="KW-0479">Metal-binding</keyword>
<keyword id="KW-0547">Nucleotide-binding</keyword>
<keyword id="KW-0648">Protein biosynthesis</keyword>
<keyword id="KW-0862">Zinc</keyword>
<evidence type="ECO:0000255" key="1">
    <source>
        <dbReference type="HAMAP-Rule" id="MF_02002"/>
    </source>
</evidence>
<protein>
    <recommendedName>
        <fullName evidence="1">Isoleucine--tRNA ligase</fullName>
        <ecNumber evidence="1">6.1.1.5</ecNumber>
    </recommendedName>
    <alternativeName>
        <fullName evidence="1">Isoleucyl-tRNA synthetase</fullName>
        <shortName evidence="1">IleRS</shortName>
    </alternativeName>
</protein>
<proteinExistence type="inferred from homology"/>
<accession>Q3K6L5</accession>
<name>SYI_PSEPF</name>
<reference key="1">
    <citation type="journal article" date="2009" name="Genome Biol.">
        <title>Genomic and genetic analyses of diversity and plant interactions of Pseudomonas fluorescens.</title>
        <authorList>
            <person name="Silby M.W."/>
            <person name="Cerdeno-Tarraga A.M."/>
            <person name="Vernikos G.S."/>
            <person name="Giddens S.R."/>
            <person name="Jackson R.W."/>
            <person name="Preston G.M."/>
            <person name="Zhang X.-X."/>
            <person name="Moon C.D."/>
            <person name="Gehrig S.M."/>
            <person name="Godfrey S.A.C."/>
            <person name="Knight C.G."/>
            <person name="Malone J.G."/>
            <person name="Robinson Z."/>
            <person name="Spiers A.J."/>
            <person name="Harris S."/>
            <person name="Challis G.L."/>
            <person name="Yaxley A.M."/>
            <person name="Harris D."/>
            <person name="Seeger K."/>
            <person name="Murphy L."/>
            <person name="Rutter S."/>
            <person name="Squares R."/>
            <person name="Quail M.A."/>
            <person name="Saunders E."/>
            <person name="Mavromatis K."/>
            <person name="Brettin T.S."/>
            <person name="Bentley S.D."/>
            <person name="Hothersall J."/>
            <person name="Stephens E."/>
            <person name="Thomas C.M."/>
            <person name="Parkhill J."/>
            <person name="Levy S.B."/>
            <person name="Rainey P.B."/>
            <person name="Thomson N.R."/>
        </authorList>
    </citation>
    <scope>NUCLEOTIDE SEQUENCE [LARGE SCALE GENOMIC DNA]</scope>
    <source>
        <strain>Pf0-1</strain>
    </source>
</reference>
<sequence length="943" mass="105507">MTDYKATLNLPDTAFPMKAGLPQREPQILQRWDSIGLYGKLREIGKDRPKFVLHDGPPYANGTIHIGHALNKILKDMIIRSKTLSGFDAPYVPGWDCHGLPIEHKVEVTHGKNLGADKTRELCRAYATEQIEGQKTEFIRLGVLGDFANPYKTMNFKNEAGEIRALAEIVKGGFVFKGLKPVNWCFDCGSALAEAEVEYENKKSSTIDVAFPIADEAKLAAAFGLPSLAKPAAIVIWTTTPWTIPANQALNVHPEFTYALVDIGDKLLVLAEELVESCLTRYGVEGTVLATAPGSALELINFRHPFYDRLSPVYLADYVELGAGTGVVHSAPAYGVDDFVTCKKYGMVNDDILNPVQSNGVYVPSLEFFGGQFIWKANPAIVDKLTEVGALLHTTVIEHSYMHCWRHKTPLIYRATAQWFIGMDKEPVSGDTLRVRSLKAIEDTKFVPAWGQARLHSMIANRPDWCISRQRNWGVPIPFFLNKESGELHPRTVELMEEVAKRVEVEGIEAWFKLDAAELLGDEAPQYDKISDTLDVWFDSGTTHWHVLRGSHPMGHETGPRADLYLEGSDQHRGWFHSSLLTGCAIDNHAPYRELLTHGFTVDESGRKMSKSLGNVIAPQKVNDTLGADIMRLWVASTDYSGEMAVSEQILQRSADAYRRIRNTARFLLSNLTGFNPATDLLPAEDMLALDRWAVDRTLLLQRELQEHYGEYRFWNVYSKIHNFCVQELGGFYLDIIKDRQYTTGADSKARRSCQTALFHISEALVRWIAPILAFTADELWQYLPGERNESVMLNTWYEGLTELPEGFELGREYWDRIMEVKVAVNKEMEIQRAAKAVGGNLQAEVTLFAEDALTADLAKLSNELRFVLITSTATVAPFVQAPADAVATEVSGLKLKIVKSAFPKCARCWHCREDVGVNPEHPEICGRCVDNIDGAGEVRHYA</sequence>
<gene>
    <name evidence="1" type="primary">ileS</name>
    <name type="ordered locus">Pfl01_4852</name>
</gene>
<organism>
    <name type="scientific">Pseudomonas fluorescens (strain Pf0-1)</name>
    <dbReference type="NCBI Taxonomy" id="205922"/>
    <lineage>
        <taxon>Bacteria</taxon>
        <taxon>Pseudomonadati</taxon>
        <taxon>Pseudomonadota</taxon>
        <taxon>Gammaproteobacteria</taxon>
        <taxon>Pseudomonadales</taxon>
        <taxon>Pseudomonadaceae</taxon>
        <taxon>Pseudomonas</taxon>
    </lineage>
</organism>
<comment type="function">
    <text evidence="1">Catalyzes the attachment of isoleucine to tRNA(Ile). As IleRS can inadvertently accommodate and process structurally similar amino acids such as valine, to avoid such errors it has two additional distinct tRNA(Ile)-dependent editing activities. One activity is designated as 'pretransfer' editing and involves the hydrolysis of activated Val-AMP. The other activity is designated 'posttransfer' editing and involves deacylation of mischarged Val-tRNA(Ile).</text>
</comment>
<comment type="catalytic activity">
    <reaction evidence="1">
        <text>tRNA(Ile) + L-isoleucine + ATP = L-isoleucyl-tRNA(Ile) + AMP + diphosphate</text>
        <dbReference type="Rhea" id="RHEA:11060"/>
        <dbReference type="Rhea" id="RHEA-COMP:9666"/>
        <dbReference type="Rhea" id="RHEA-COMP:9695"/>
        <dbReference type="ChEBI" id="CHEBI:30616"/>
        <dbReference type="ChEBI" id="CHEBI:33019"/>
        <dbReference type="ChEBI" id="CHEBI:58045"/>
        <dbReference type="ChEBI" id="CHEBI:78442"/>
        <dbReference type="ChEBI" id="CHEBI:78528"/>
        <dbReference type="ChEBI" id="CHEBI:456215"/>
        <dbReference type="EC" id="6.1.1.5"/>
    </reaction>
</comment>
<comment type="cofactor">
    <cofactor evidence="1">
        <name>Zn(2+)</name>
        <dbReference type="ChEBI" id="CHEBI:29105"/>
    </cofactor>
    <text evidence="1">Binds 1 zinc ion per subunit.</text>
</comment>
<comment type="subunit">
    <text evidence="1">Monomer.</text>
</comment>
<comment type="subcellular location">
    <subcellularLocation>
        <location evidence="1">Cytoplasm</location>
    </subcellularLocation>
</comment>
<comment type="domain">
    <text evidence="1">IleRS has two distinct active sites: one for aminoacylation and one for editing. The misactivated valine is translocated from the active site to the editing site, which sterically excludes the correctly activated isoleucine. The single editing site contains two valyl binding pockets, one specific for each substrate (Val-AMP or Val-tRNA(Ile)).</text>
</comment>
<comment type="similarity">
    <text evidence="1">Belongs to the class-I aminoacyl-tRNA synthetase family. IleS type 1 subfamily.</text>
</comment>